<reference key="1">
    <citation type="submission" date="2006-12" db="EMBL/GenBank/DDBJ databases">
        <title>Complete sequence of Shewanella amazonensis SB2B.</title>
        <authorList>
            <consortium name="US DOE Joint Genome Institute"/>
            <person name="Copeland A."/>
            <person name="Lucas S."/>
            <person name="Lapidus A."/>
            <person name="Barry K."/>
            <person name="Detter J.C."/>
            <person name="Glavina del Rio T."/>
            <person name="Hammon N."/>
            <person name="Israni S."/>
            <person name="Dalin E."/>
            <person name="Tice H."/>
            <person name="Pitluck S."/>
            <person name="Munk A.C."/>
            <person name="Brettin T."/>
            <person name="Bruce D."/>
            <person name="Han C."/>
            <person name="Tapia R."/>
            <person name="Gilna P."/>
            <person name="Schmutz J."/>
            <person name="Larimer F."/>
            <person name="Land M."/>
            <person name="Hauser L."/>
            <person name="Kyrpides N."/>
            <person name="Mikhailova N."/>
            <person name="Fredrickson J."/>
            <person name="Richardson P."/>
        </authorList>
    </citation>
    <scope>NUCLEOTIDE SEQUENCE [LARGE SCALE GENOMIC DNA]</scope>
    <source>
        <strain>ATCC BAA-1098 / SB2B</strain>
    </source>
</reference>
<name>RL20_SHEAM</name>
<proteinExistence type="inferred from homology"/>
<evidence type="ECO:0000255" key="1">
    <source>
        <dbReference type="HAMAP-Rule" id="MF_00382"/>
    </source>
</evidence>
<evidence type="ECO:0000305" key="2"/>
<sequence>MPRVKRGVTARARHKKILKLAKGYYGARSRTYRVAVQAVIKAGQYAYRDRRQKKRQFRQLWIARINAASRQNGLSYSRFINGLKKASIEIDRKILADIAVFDKVVFATLVEKAKEALTK</sequence>
<organism>
    <name type="scientific">Shewanella amazonensis (strain ATCC BAA-1098 / SB2B)</name>
    <dbReference type="NCBI Taxonomy" id="326297"/>
    <lineage>
        <taxon>Bacteria</taxon>
        <taxon>Pseudomonadati</taxon>
        <taxon>Pseudomonadota</taxon>
        <taxon>Gammaproteobacteria</taxon>
        <taxon>Alteromonadales</taxon>
        <taxon>Shewanellaceae</taxon>
        <taxon>Shewanella</taxon>
    </lineage>
</organism>
<gene>
    <name evidence="1" type="primary">rplT</name>
    <name type="ordered locus">Sama_1768</name>
</gene>
<comment type="function">
    <text evidence="1">Binds directly to 23S ribosomal RNA and is necessary for the in vitro assembly process of the 50S ribosomal subunit. It is not involved in the protein synthesizing functions of that subunit.</text>
</comment>
<comment type="similarity">
    <text evidence="1">Belongs to the bacterial ribosomal protein bL20 family.</text>
</comment>
<dbReference type="EMBL" id="CP000507">
    <property type="protein sequence ID" value="ABL99973.1"/>
    <property type="molecule type" value="Genomic_DNA"/>
</dbReference>
<dbReference type="RefSeq" id="WP_011759881.1">
    <property type="nucleotide sequence ID" value="NC_008700.1"/>
</dbReference>
<dbReference type="SMR" id="A1S6G7"/>
<dbReference type="STRING" id="326297.Sama_1768"/>
<dbReference type="KEGG" id="saz:Sama_1768"/>
<dbReference type="eggNOG" id="COG0292">
    <property type="taxonomic scope" value="Bacteria"/>
</dbReference>
<dbReference type="HOGENOM" id="CLU_123265_0_1_6"/>
<dbReference type="OrthoDB" id="9808966at2"/>
<dbReference type="Proteomes" id="UP000009175">
    <property type="component" value="Chromosome"/>
</dbReference>
<dbReference type="GO" id="GO:1990904">
    <property type="term" value="C:ribonucleoprotein complex"/>
    <property type="evidence" value="ECO:0007669"/>
    <property type="project" value="UniProtKB-KW"/>
</dbReference>
<dbReference type="GO" id="GO:0005840">
    <property type="term" value="C:ribosome"/>
    <property type="evidence" value="ECO:0007669"/>
    <property type="project" value="UniProtKB-KW"/>
</dbReference>
<dbReference type="GO" id="GO:0019843">
    <property type="term" value="F:rRNA binding"/>
    <property type="evidence" value="ECO:0007669"/>
    <property type="project" value="UniProtKB-UniRule"/>
</dbReference>
<dbReference type="GO" id="GO:0003735">
    <property type="term" value="F:structural constituent of ribosome"/>
    <property type="evidence" value="ECO:0007669"/>
    <property type="project" value="InterPro"/>
</dbReference>
<dbReference type="GO" id="GO:0000027">
    <property type="term" value="P:ribosomal large subunit assembly"/>
    <property type="evidence" value="ECO:0007669"/>
    <property type="project" value="UniProtKB-UniRule"/>
</dbReference>
<dbReference type="GO" id="GO:0006412">
    <property type="term" value="P:translation"/>
    <property type="evidence" value="ECO:0007669"/>
    <property type="project" value="InterPro"/>
</dbReference>
<dbReference type="CDD" id="cd07026">
    <property type="entry name" value="Ribosomal_L20"/>
    <property type="match status" value="1"/>
</dbReference>
<dbReference type="FunFam" id="1.10.1900.20:FF:000001">
    <property type="entry name" value="50S ribosomal protein L20"/>
    <property type="match status" value="1"/>
</dbReference>
<dbReference type="Gene3D" id="6.10.160.10">
    <property type="match status" value="1"/>
</dbReference>
<dbReference type="Gene3D" id="1.10.1900.20">
    <property type="entry name" value="Ribosomal protein L20"/>
    <property type="match status" value="1"/>
</dbReference>
<dbReference type="HAMAP" id="MF_00382">
    <property type="entry name" value="Ribosomal_bL20"/>
    <property type="match status" value="1"/>
</dbReference>
<dbReference type="InterPro" id="IPR005813">
    <property type="entry name" value="Ribosomal_bL20"/>
</dbReference>
<dbReference type="InterPro" id="IPR049946">
    <property type="entry name" value="RIBOSOMAL_L20_CS"/>
</dbReference>
<dbReference type="InterPro" id="IPR035566">
    <property type="entry name" value="Ribosomal_protein_bL20_C"/>
</dbReference>
<dbReference type="NCBIfam" id="TIGR01032">
    <property type="entry name" value="rplT_bact"/>
    <property type="match status" value="1"/>
</dbReference>
<dbReference type="PANTHER" id="PTHR10986">
    <property type="entry name" value="39S RIBOSOMAL PROTEIN L20"/>
    <property type="match status" value="1"/>
</dbReference>
<dbReference type="Pfam" id="PF00453">
    <property type="entry name" value="Ribosomal_L20"/>
    <property type="match status" value="1"/>
</dbReference>
<dbReference type="PRINTS" id="PR00062">
    <property type="entry name" value="RIBOSOMALL20"/>
</dbReference>
<dbReference type="SUPFAM" id="SSF74731">
    <property type="entry name" value="Ribosomal protein L20"/>
    <property type="match status" value="1"/>
</dbReference>
<dbReference type="PROSITE" id="PS00937">
    <property type="entry name" value="RIBOSOMAL_L20"/>
    <property type="match status" value="1"/>
</dbReference>
<keyword id="KW-1185">Reference proteome</keyword>
<keyword id="KW-0687">Ribonucleoprotein</keyword>
<keyword id="KW-0689">Ribosomal protein</keyword>
<keyword id="KW-0694">RNA-binding</keyword>
<keyword id="KW-0699">rRNA-binding</keyword>
<protein>
    <recommendedName>
        <fullName evidence="1">Large ribosomal subunit protein bL20</fullName>
    </recommendedName>
    <alternativeName>
        <fullName evidence="2">50S ribosomal protein L20</fullName>
    </alternativeName>
</protein>
<accession>A1S6G7</accession>
<feature type="chain" id="PRO_1000049063" description="Large ribosomal subunit protein bL20">
    <location>
        <begin position="1"/>
        <end position="119"/>
    </location>
</feature>